<name>STRN_MOUSE</name>
<comment type="function">
    <text evidence="1">Calmodulin-binding scaffolding protein which is the center of the striatin-interacting phosphatase and kinase (STRIPAK) complexes. STRIPAK complexes have critical roles in protein (de)phosphorylation and are regulators of multiple signaling pathways including Hippo, MAPK, nuclear receptor and cytoskeleton remodeling. Different types of STRIPAK complexes are involved in a variety of biological processes such as cell growth, differentiation, apoptosis, metabolism and immune regulation.</text>
</comment>
<comment type="subunit">
    <text evidence="1 2">Part of the core of STRIPAK complexes composed of PP2A catalytic and scaffolding subunits, the striatins (PP2A regulatory subunits), the striatin-associated proteins MOB4, STRIP1 and STRIP2, PDCD10 and members of the STE20 kinases, such as STK24 and STK26 (By similarity). Interacts with CTTNBP2; this interaction may regulate dendritic spine distribution of STRN. Activation of glutamate receptors weakens the interaction with CTTNBP2 (By similarity).</text>
</comment>
<comment type="subcellular location">
    <subcellularLocation>
        <location evidence="2">Cytoplasm</location>
    </subcellularLocation>
    <subcellularLocation>
        <location evidence="2">Membrane</location>
        <topology evidence="2">Peripheral membrane protein</topology>
    </subcellularLocation>
    <subcellularLocation>
        <location evidence="2">Cell projection</location>
        <location evidence="2">Dendritic spine</location>
    </subcellularLocation>
    <text evidence="2">CTTNBP2-binding may regulate dendritic spine distribution.</text>
</comment>
<comment type="tissue specificity">
    <text evidence="5">Mainly expressed in brain but is also expressed at low levels in various tissues such as kidney, spleen, skeletal muscle and lung.</text>
</comment>
<comment type="similarity">
    <text evidence="6">Belongs to the WD repeat striatin family.</text>
</comment>
<protein>
    <recommendedName>
        <fullName>Striatin</fullName>
    </recommendedName>
</protein>
<proteinExistence type="evidence at protein level"/>
<dbReference type="EMBL" id="AJ223777">
    <property type="protein sequence ID" value="CAA11545.1"/>
    <property type="molecule type" value="mRNA"/>
</dbReference>
<dbReference type="EMBL" id="BC090968">
    <property type="protein sequence ID" value="AAH90968.1"/>
    <property type="molecule type" value="mRNA"/>
</dbReference>
<dbReference type="EMBL" id="BC150727">
    <property type="protein sequence ID" value="AAI50728.1"/>
    <property type="molecule type" value="mRNA"/>
</dbReference>
<dbReference type="CCDS" id="CCDS28978.1"/>
<dbReference type="RefSeq" id="NP_035630.2">
    <property type="nucleotide sequence ID" value="NM_011500.3"/>
</dbReference>
<dbReference type="SMR" id="O55106"/>
<dbReference type="BioGRID" id="234590">
    <property type="interactions" value="25"/>
</dbReference>
<dbReference type="FunCoup" id="O55106">
    <property type="interactions" value="1383"/>
</dbReference>
<dbReference type="IntAct" id="O55106">
    <property type="interactions" value="35"/>
</dbReference>
<dbReference type="MINT" id="O55106"/>
<dbReference type="STRING" id="10090.ENSMUSP00000120830"/>
<dbReference type="ChEMBL" id="CHEMBL4879416"/>
<dbReference type="GlyGen" id="O55106">
    <property type="glycosylation" value="3 sites, 1 N-linked glycan (1 site), 1 O-linked glycan (2 sites)"/>
</dbReference>
<dbReference type="iPTMnet" id="O55106"/>
<dbReference type="PhosphoSitePlus" id="O55106"/>
<dbReference type="SwissPalm" id="O55106"/>
<dbReference type="jPOST" id="O55106"/>
<dbReference type="PaxDb" id="10090-ENSMUSP00000120830"/>
<dbReference type="PeptideAtlas" id="O55106"/>
<dbReference type="ProteomicsDB" id="257467"/>
<dbReference type="Pumba" id="O55106"/>
<dbReference type="Antibodypedia" id="2791">
    <property type="antibodies" value="187 antibodies from 28 providers"/>
</dbReference>
<dbReference type="DNASU" id="268980"/>
<dbReference type="Ensembl" id="ENSMUST00000145910.9">
    <property type="protein sequence ID" value="ENSMUSP00000120830.3"/>
    <property type="gene ID" value="ENSMUSG00000024077.16"/>
</dbReference>
<dbReference type="GeneID" id="268980"/>
<dbReference type="KEGG" id="mmu:268980"/>
<dbReference type="UCSC" id="uc008doz.1">
    <property type="organism name" value="mouse"/>
</dbReference>
<dbReference type="AGR" id="MGI:1333757"/>
<dbReference type="CTD" id="6801"/>
<dbReference type="MGI" id="MGI:1333757">
    <property type="gene designation" value="Strn"/>
</dbReference>
<dbReference type="VEuPathDB" id="HostDB:ENSMUSG00000024077"/>
<dbReference type="eggNOG" id="KOG0642">
    <property type="taxonomic scope" value="Eukaryota"/>
</dbReference>
<dbReference type="GeneTree" id="ENSGT00950000183095"/>
<dbReference type="HOGENOM" id="CLU_009108_2_0_1"/>
<dbReference type="InParanoid" id="O55106"/>
<dbReference type="OMA" id="KTDLMRR"/>
<dbReference type="OrthoDB" id="727118at2759"/>
<dbReference type="PhylomeDB" id="O55106"/>
<dbReference type="TreeFam" id="TF313387"/>
<dbReference type="Reactome" id="R-MMU-1257604">
    <property type="pathway name" value="PIP3 activates AKT signaling"/>
</dbReference>
<dbReference type="Reactome" id="R-MMU-6811558">
    <property type="pathway name" value="PI5P, PP2A and IER3 Regulate PI3K/AKT Signaling"/>
</dbReference>
<dbReference type="Reactome" id="R-MMU-9009391">
    <property type="pathway name" value="Extra-nuclear estrogen signaling"/>
</dbReference>
<dbReference type="BioGRID-ORCS" id="268980">
    <property type="hits" value="3 hits in 79 CRISPR screens"/>
</dbReference>
<dbReference type="CD-CODE" id="CE726F99">
    <property type="entry name" value="Postsynaptic density"/>
</dbReference>
<dbReference type="ChiTaRS" id="Strn">
    <property type="organism name" value="mouse"/>
</dbReference>
<dbReference type="PRO" id="PR:O55106"/>
<dbReference type="Proteomes" id="UP000000589">
    <property type="component" value="Chromosome 17"/>
</dbReference>
<dbReference type="RNAct" id="O55106">
    <property type="molecule type" value="protein"/>
</dbReference>
<dbReference type="Bgee" id="ENSMUSG00000024077">
    <property type="expression patterns" value="Expressed in animal zygote and 252 other cell types or tissues"/>
</dbReference>
<dbReference type="ExpressionAtlas" id="O55106">
    <property type="expression patterns" value="baseline and differential"/>
</dbReference>
<dbReference type="GO" id="GO:0005923">
    <property type="term" value="C:bicellular tight junction"/>
    <property type="evidence" value="ECO:0007669"/>
    <property type="project" value="Ensembl"/>
</dbReference>
<dbReference type="GO" id="GO:0005737">
    <property type="term" value="C:cytoplasm"/>
    <property type="evidence" value="ECO:0007669"/>
    <property type="project" value="UniProtKB-SubCell"/>
</dbReference>
<dbReference type="GO" id="GO:0043197">
    <property type="term" value="C:dendritic spine"/>
    <property type="evidence" value="ECO:0007669"/>
    <property type="project" value="UniProtKB-SubCell"/>
</dbReference>
<dbReference type="GO" id="GO:0090443">
    <property type="term" value="C:FAR/SIN/STRIPAK complex"/>
    <property type="evidence" value="ECO:0007669"/>
    <property type="project" value="Ensembl"/>
</dbReference>
<dbReference type="GO" id="GO:0016020">
    <property type="term" value="C:membrane"/>
    <property type="evidence" value="ECO:0007669"/>
    <property type="project" value="UniProtKB-SubCell"/>
</dbReference>
<dbReference type="GO" id="GO:0070016">
    <property type="term" value="F:armadillo repeat domain binding"/>
    <property type="evidence" value="ECO:0007669"/>
    <property type="project" value="Ensembl"/>
</dbReference>
<dbReference type="GO" id="GO:0005516">
    <property type="term" value="F:calmodulin binding"/>
    <property type="evidence" value="ECO:0007669"/>
    <property type="project" value="UniProtKB-KW"/>
</dbReference>
<dbReference type="GO" id="GO:0030331">
    <property type="term" value="F:nuclear estrogen receptor binding"/>
    <property type="evidence" value="ECO:0007669"/>
    <property type="project" value="Ensembl"/>
</dbReference>
<dbReference type="GO" id="GO:0051721">
    <property type="term" value="F:protein phosphatase 2A binding"/>
    <property type="evidence" value="ECO:0007669"/>
    <property type="project" value="Ensembl"/>
</dbReference>
<dbReference type="GO" id="GO:0044877">
    <property type="term" value="F:protein-containing complex binding"/>
    <property type="evidence" value="ECO:0007669"/>
    <property type="project" value="Ensembl"/>
</dbReference>
<dbReference type="GO" id="GO:0008285">
    <property type="term" value="P:negative regulation of cell population proliferation"/>
    <property type="evidence" value="ECO:0007669"/>
    <property type="project" value="Ensembl"/>
</dbReference>
<dbReference type="GO" id="GO:0016055">
    <property type="term" value="P:Wnt signaling pathway"/>
    <property type="evidence" value="ECO:0007669"/>
    <property type="project" value="Ensembl"/>
</dbReference>
<dbReference type="CDD" id="cd00200">
    <property type="entry name" value="WD40"/>
    <property type="match status" value="1"/>
</dbReference>
<dbReference type="FunFam" id="2.130.10.10:FF:001505">
    <property type="entry name" value="Striatin"/>
    <property type="match status" value="1"/>
</dbReference>
<dbReference type="FunFam" id="1.20.5.300:FF:000001">
    <property type="entry name" value="striatin isoform X1"/>
    <property type="match status" value="1"/>
</dbReference>
<dbReference type="FunFam" id="2.130.10.10:FF:000079">
    <property type="entry name" value="striatin isoform X1"/>
    <property type="match status" value="1"/>
</dbReference>
<dbReference type="FunFam" id="2.130.10.10:FF:000211">
    <property type="entry name" value="striatin isoform X1"/>
    <property type="match status" value="1"/>
</dbReference>
<dbReference type="Gene3D" id="1.20.5.300">
    <property type="match status" value="1"/>
</dbReference>
<dbReference type="Gene3D" id="2.130.10.10">
    <property type="entry name" value="YVTN repeat-like/Quinoprotein amine dehydrogenase"/>
    <property type="match status" value="3"/>
</dbReference>
<dbReference type="InterPro" id="IPR020472">
    <property type="entry name" value="G-protein_beta_WD-40_rep"/>
</dbReference>
<dbReference type="InterPro" id="IPR013258">
    <property type="entry name" value="Striatin_N"/>
</dbReference>
<dbReference type="InterPro" id="IPR015943">
    <property type="entry name" value="WD40/YVTN_repeat-like_dom_sf"/>
</dbReference>
<dbReference type="InterPro" id="IPR019775">
    <property type="entry name" value="WD40_repeat_CS"/>
</dbReference>
<dbReference type="InterPro" id="IPR036322">
    <property type="entry name" value="WD40_repeat_dom_sf"/>
</dbReference>
<dbReference type="InterPro" id="IPR001680">
    <property type="entry name" value="WD40_rpt"/>
</dbReference>
<dbReference type="InterPro" id="IPR051488">
    <property type="entry name" value="WD_repeat_striatin"/>
</dbReference>
<dbReference type="PANTHER" id="PTHR15653">
    <property type="entry name" value="STRIATIN"/>
    <property type="match status" value="1"/>
</dbReference>
<dbReference type="PANTHER" id="PTHR15653:SF2">
    <property type="entry name" value="STRIATIN"/>
    <property type="match status" value="1"/>
</dbReference>
<dbReference type="Pfam" id="PF08232">
    <property type="entry name" value="Striatin"/>
    <property type="match status" value="1"/>
</dbReference>
<dbReference type="Pfam" id="PF00400">
    <property type="entry name" value="WD40"/>
    <property type="match status" value="5"/>
</dbReference>
<dbReference type="PRINTS" id="PR00320">
    <property type="entry name" value="GPROTEINBRPT"/>
</dbReference>
<dbReference type="SMART" id="SM00320">
    <property type="entry name" value="WD40"/>
    <property type="match status" value="6"/>
</dbReference>
<dbReference type="SUPFAM" id="SSF50978">
    <property type="entry name" value="WD40 repeat-like"/>
    <property type="match status" value="1"/>
</dbReference>
<dbReference type="PROSITE" id="PS00678">
    <property type="entry name" value="WD_REPEATS_1"/>
    <property type="match status" value="3"/>
</dbReference>
<dbReference type="PROSITE" id="PS50082">
    <property type="entry name" value="WD_REPEATS_2"/>
    <property type="match status" value="4"/>
</dbReference>
<dbReference type="PROSITE" id="PS50294">
    <property type="entry name" value="WD_REPEATS_REGION"/>
    <property type="match status" value="1"/>
</dbReference>
<keyword id="KW-0112">Calmodulin-binding</keyword>
<keyword id="KW-0966">Cell projection</keyword>
<keyword id="KW-0175">Coiled coil</keyword>
<keyword id="KW-0963">Cytoplasm</keyword>
<keyword id="KW-0472">Membrane</keyword>
<keyword id="KW-0597">Phosphoprotein</keyword>
<keyword id="KW-1185">Reference proteome</keyword>
<keyword id="KW-0677">Repeat</keyword>
<keyword id="KW-0770">Synapse</keyword>
<keyword id="KW-0853">WD repeat</keyword>
<evidence type="ECO:0000250" key="1">
    <source>
        <dbReference type="UniProtKB" id="O43815"/>
    </source>
</evidence>
<evidence type="ECO:0000250" key="2">
    <source>
        <dbReference type="UniProtKB" id="P70483"/>
    </source>
</evidence>
<evidence type="ECO:0000255" key="3"/>
<evidence type="ECO:0000256" key="4">
    <source>
        <dbReference type="SAM" id="MobiDB-lite"/>
    </source>
</evidence>
<evidence type="ECO:0000269" key="5">
    <source>
    </source>
</evidence>
<evidence type="ECO:0000305" key="6"/>
<evidence type="ECO:0007744" key="7">
    <source>
    </source>
</evidence>
<sequence length="780" mass="85966">MDEQAGPGVFFSNNHPGAGGAKGLGPLAEAAAAGDGAAAAGAARAQYSLPGILHFLQHEWARFEVERAQWEVERAELQAQIAFLQGERKGQENLKKDLVRRIKMLEYALKQERAKYHKLKYGTELNQGDMKPPSYDSDEGNETEVQPQQNSQLMWKQGRQLLRQYLQEVGYTDTILDVKSKRVRALLGFSSDVTDREDDKNQDSVINGTEAEVKETAMIGKSELTDSASVLDNFKFLESAAADVSDEDEDEDTDGRAKSVIDTSTIVRKKALPDTSEDRDTKEALKEFDFLVTSEEGDNESRSAGDGTDWEKEDQCLTPEAWNVDQGVISKLKEQYKKERKGKKGVKRPNRSKLQDMLANLRDVDELPSLQPSVGSPSRPSSSRLPEQELSRADEVEALTFPPSSGKSFIMGADEALESELGLGELAGLTVANEADSLAYDIANNKDALRKTWNPKFTLRSHFDGIRALAFHPIEPVLITASEDHTLKMWNLQKTAPAKKSTSLDVEPIYTFRAHKGPVLCVVMSSNGEQCYSGGTDGRIQSWSTTNPNVDPYDAYDPSVLRGPLLGHTDAVWGLAYSAAHQRLLSCSADGTLRLWNTTEVAPALSVFNDNQELGIPASVDLVSSDPSHMVASFSKGYTSIFNMETQQRVLTLESNVDSTSSSSCQINRVISHPTLPISITAHEDRHIKFYDNNTGKLIHSMVAHLEAVTSLAVDPNGLYLMSGSHDCSIRLWNLESKTCIQEFTAHRKKFEESIHDVAFHPSKCYIASAGADALAKVFV</sequence>
<feature type="chain" id="PRO_0000051233" description="Striatin">
    <location>
        <begin position="1"/>
        <end position="780"/>
    </location>
</feature>
<feature type="repeat" description="WD 1" evidence="3">
    <location>
        <begin position="461"/>
        <end position="500"/>
    </location>
</feature>
<feature type="repeat" description="WD 2" evidence="3">
    <location>
        <begin position="514"/>
        <end position="553"/>
    </location>
</feature>
<feature type="repeat" description="WD 3" evidence="3">
    <location>
        <begin position="567"/>
        <end position="606"/>
    </location>
</feature>
<feature type="repeat" description="WD 4" evidence="3">
    <location>
        <begin position="662"/>
        <end position="701"/>
    </location>
</feature>
<feature type="repeat" description="WD 5" evidence="3">
    <location>
        <begin position="704"/>
        <end position="743"/>
    </location>
</feature>
<feature type="repeat" description="WD 6" evidence="3">
    <location>
        <begin position="750"/>
        <end position="780"/>
    </location>
</feature>
<feature type="region of interest" description="Caveolin-binding" evidence="3">
    <location>
        <begin position="55"/>
        <end position="63"/>
    </location>
</feature>
<feature type="region of interest" description="Disordered" evidence="4">
    <location>
        <begin position="123"/>
        <end position="150"/>
    </location>
</feature>
<feature type="region of interest" description="Calmodulin-binding" evidence="3">
    <location>
        <begin position="149"/>
        <end position="166"/>
    </location>
</feature>
<feature type="region of interest" description="Disordered" evidence="4">
    <location>
        <begin position="289"/>
        <end position="312"/>
    </location>
</feature>
<feature type="region of interest" description="Disordered" evidence="4">
    <location>
        <begin position="334"/>
        <end position="353"/>
    </location>
</feature>
<feature type="region of interest" description="Disordered" evidence="4">
    <location>
        <begin position="364"/>
        <end position="392"/>
    </location>
</feature>
<feature type="coiled-coil region" evidence="3">
    <location>
        <begin position="53"/>
        <end position="120"/>
    </location>
</feature>
<feature type="compositionally biased region" description="Basic and acidic residues" evidence="4">
    <location>
        <begin position="299"/>
        <end position="312"/>
    </location>
</feature>
<feature type="compositionally biased region" description="Basic residues" evidence="4">
    <location>
        <begin position="338"/>
        <end position="351"/>
    </location>
</feature>
<feature type="modified residue" description="Phosphoserine" evidence="7">
    <location>
        <position position="137"/>
    </location>
</feature>
<feature type="modified residue" description="Phosphothreonine" evidence="7">
    <location>
        <position position="225"/>
    </location>
</feature>
<feature type="modified residue" description="Phosphoserine" evidence="1">
    <location>
        <position position="227"/>
    </location>
</feature>
<feature type="modified residue" description="Phosphoserine" evidence="1">
    <location>
        <position position="229"/>
    </location>
</feature>
<feature type="modified residue" description="Phosphoserine" evidence="7">
    <location>
        <position position="245"/>
    </location>
</feature>
<feature type="modified residue" description="Phosphoserine" evidence="1">
    <location>
        <position position="259"/>
    </location>
</feature>
<feature type="sequence conflict" description="In Ref. 1; CAA11545." evidence="6" ref="1">
    <original>V</original>
    <variation>F</variation>
    <location>
        <position position="244"/>
    </location>
</feature>
<accession>O55106</accession>
<accession>B2RWV9</accession>
<accession>Q5BKR9</accession>
<reference key="1">
    <citation type="submission" date="1998-01" db="EMBL/GenBank/DDBJ databases">
        <authorList>
            <person name="Moqrich A."/>
            <person name="Mattei M.-G."/>
            <person name="Bartoli M."/>
            <person name="Rakitina T."/>
            <person name="Baillat G."/>
            <person name="Monneron A."/>
            <person name="Castets F."/>
        </authorList>
    </citation>
    <scope>NUCLEOTIDE SEQUENCE [MRNA]</scope>
    <source>
        <strain>Swiss Webster</strain>
        <tissue>Brain</tissue>
    </source>
</reference>
<reference key="2">
    <citation type="journal article" date="2004" name="Genome Res.">
        <title>The status, quality, and expansion of the NIH full-length cDNA project: the Mammalian Gene Collection (MGC).</title>
        <authorList>
            <consortium name="The MGC Project Team"/>
        </authorList>
    </citation>
    <scope>NUCLEOTIDE SEQUENCE [LARGE SCALE MRNA]</scope>
    <source>
        <strain>C57BL/6J</strain>
        <tissue>Brain</tissue>
        <tissue>Eye</tissue>
    </source>
</reference>
<reference key="3">
    <citation type="journal article" date="2000" name="J. Biol. Chem.">
        <title>Zinedin, SG2NA, and striatin are calmodulin-binding, WD repeat proteins principally expressed in the brain.</title>
        <authorList>
            <person name="Castets F."/>
            <person name="Rakitina T."/>
            <person name="Gaillard S."/>
            <person name="Moqrich A."/>
            <person name="Mattei M.-G."/>
            <person name="Monneron A."/>
        </authorList>
    </citation>
    <scope>TISSUE SPECIFICITY</scope>
</reference>
<reference key="4">
    <citation type="journal article" date="2007" name="Proc. Natl. Acad. Sci. U.S.A.">
        <title>Large-scale phosphorylation analysis of mouse liver.</title>
        <authorList>
            <person name="Villen J."/>
            <person name="Beausoleil S.A."/>
            <person name="Gerber S.A."/>
            <person name="Gygi S.P."/>
        </authorList>
    </citation>
    <scope>IDENTIFICATION BY MASS SPECTROMETRY [LARGE SCALE ANALYSIS]</scope>
    <source>
        <tissue>Liver</tissue>
    </source>
</reference>
<reference key="5">
    <citation type="journal article" date="2010" name="Cell">
        <title>A tissue-specific atlas of mouse protein phosphorylation and expression.</title>
        <authorList>
            <person name="Huttlin E.L."/>
            <person name="Jedrychowski M.P."/>
            <person name="Elias J.E."/>
            <person name="Goswami T."/>
            <person name="Rad R."/>
            <person name="Beausoleil S.A."/>
            <person name="Villen J."/>
            <person name="Haas W."/>
            <person name="Sowa M.E."/>
            <person name="Gygi S.P."/>
        </authorList>
    </citation>
    <scope>PHOSPHORYLATION [LARGE SCALE ANALYSIS] AT SER-137; THR-225 AND SER-245</scope>
    <scope>IDENTIFICATION BY MASS SPECTROMETRY [LARGE SCALE ANALYSIS]</scope>
    <source>
        <tissue>Brain</tissue>
        <tissue>Brown adipose tissue</tissue>
        <tissue>Heart</tissue>
        <tissue>Kidney</tissue>
        <tissue>Liver</tissue>
        <tissue>Lung</tissue>
        <tissue>Pancreas</tissue>
        <tissue>Spleen</tissue>
        <tissue>Testis</tissue>
    </source>
</reference>
<organism>
    <name type="scientific">Mus musculus</name>
    <name type="common">Mouse</name>
    <dbReference type="NCBI Taxonomy" id="10090"/>
    <lineage>
        <taxon>Eukaryota</taxon>
        <taxon>Metazoa</taxon>
        <taxon>Chordata</taxon>
        <taxon>Craniata</taxon>
        <taxon>Vertebrata</taxon>
        <taxon>Euteleostomi</taxon>
        <taxon>Mammalia</taxon>
        <taxon>Eutheria</taxon>
        <taxon>Euarchontoglires</taxon>
        <taxon>Glires</taxon>
        <taxon>Rodentia</taxon>
        <taxon>Myomorpha</taxon>
        <taxon>Muroidea</taxon>
        <taxon>Muridae</taxon>
        <taxon>Murinae</taxon>
        <taxon>Mus</taxon>
        <taxon>Mus</taxon>
    </lineage>
</organism>
<gene>
    <name type="primary">Strn</name>
</gene>